<proteinExistence type="inferred from homology"/>
<sequence>MNNAPHLYFAWQQLVEKSQLMLRLATEEQWDELIASEMAYVNAVQEIAHLTEEVAPSTTMQEQLRPMLHLILDNESKVKQLLQIRMDELAKLVGQSSVQKSVLSAYGDQGGFVLAPQDNLF</sequence>
<organism>
    <name type="scientific">Escherichia coli (strain UTI89 / UPEC)</name>
    <dbReference type="NCBI Taxonomy" id="364106"/>
    <lineage>
        <taxon>Bacteria</taxon>
        <taxon>Pseudomonadati</taxon>
        <taxon>Pseudomonadota</taxon>
        <taxon>Gammaproteobacteria</taxon>
        <taxon>Enterobacterales</taxon>
        <taxon>Enterobacteriaceae</taxon>
        <taxon>Escherichia</taxon>
    </lineage>
</organism>
<gene>
    <name evidence="1" type="primary">fliT</name>
    <name type="ordered locus">UTI89_C2127</name>
</gene>
<evidence type="ECO:0000255" key="1">
    <source>
        <dbReference type="HAMAP-Rule" id="MF_01180"/>
    </source>
</evidence>
<name>FLIT_ECOUT</name>
<accession>Q1RAL4</accession>
<reference key="1">
    <citation type="journal article" date="2006" name="Proc. Natl. Acad. Sci. U.S.A.">
        <title>Identification of genes subject to positive selection in uropathogenic strains of Escherichia coli: a comparative genomics approach.</title>
        <authorList>
            <person name="Chen S.L."/>
            <person name="Hung C.-S."/>
            <person name="Xu J."/>
            <person name="Reigstad C.S."/>
            <person name="Magrini V."/>
            <person name="Sabo A."/>
            <person name="Blasiar D."/>
            <person name="Bieri T."/>
            <person name="Meyer R.R."/>
            <person name="Ozersky P."/>
            <person name="Armstrong J.R."/>
            <person name="Fulton R.S."/>
            <person name="Latreille J.P."/>
            <person name="Spieth J."/>
            <person name="Hooton T.M."/>
            <person name="Mardis E.R."/>
            <person name="Hultgren S.J."/>
            <person name="Gordon J.I."/>
        </authorList>
    </citation>
    <scope>NUCLEOTIDE SEQUENCE [LARGE SCALE GENOMIC DNA]</scope>
    <source>
        <strain>UTI89 / UPEC</strain>
    </source>
</reference>
<protein>
    <recommendedName>
        <fullName evidence="1">Flagellar protein FliT</fullName>
    </recommendedName>
</protein>
<keyword id="KW-1005">Bacterial flagellum biogenesis</keyword>
<keyword id="KW-0143">Chaperone</keyword>
<keyword id="KW-0963">Cytoplasm</keyword>
<keyword id="KW-0678">Repressor</keyword>
<keyword id="KW-0804">Transcription</keyword>
<keyword id="KW-0805">Transcription regulation</keyword>
<comment type="function">
    <text evidence="1">Dual-function protein that regulates the transcription of class 2 flagellar operons and that also acts as an export chaperone for the filament-capping protein FliD. As a transcriptional regulator, acts as an anti-FlhDC factor; it directly binds FlhC, thus inhibiting the binding of the FlhC/FlhD complex to class 2 promoters, resulting in decreased expression of class 2 flagellar operons. As a chaperone, effects FliD transition to the membrane by preventing its premature polymerization, and by directing it to the export apparatus.</text>
</comment>
<comment type="subunit">
    <text evidence="1">Homodimer. Interacts with FliD and FlhC.</text>
</comment>
<comment type="subcellular location">
    <subcellularLocation>
        <location evidence="1">Cytoplasm</location>
        <location evidence="1">Cytosol</location>
    </subcellularLocation>
</comment>
<comment type="similarity">
    <text evidence="1">Belongs to the FliT family.</text>
</comment>
<feature type="chain" id="PRO_0000353880" description="Flagellar protein FliT">
    <location>
        <begin position="1"/>
        <end position="121"/>
    </location>
</feature>
<feature type="region of interest" description="Required for homodimerization" evidence="1">
    <location>
        <begin position="1"/>
        <end position="50"/>
    </location>
</feature>
<feature type="region of interest" description="FliD binding" evidence="1">
    <location>
        <begin position="60"/>
        <end position="98"/>
    </location>
</feature>
<dbReference type="EMBL" id="CP000243">
    <property type="protein sequence ID" value="ABE07600.1"/>
    <property type="molecule type" value="Genomic_DNA"/>
</dbReference>
<dbReference type="RefSeq" id="WP_001057836.1">
    <property type="nucleotide sequence ID" value="NZ_CP064825.1"/>
</dbReference>
<dbReference type="SMR" id="Q1RAL4"/>
<dbReference type="KEGG" id="eci:UTI89_C2127"/>
<dbReference type="HOGENOM" id="CLU_155793_1_1_6"/>
<dbReference type="Proteomes" id="UP000001952">
    <property type="component" value="Chromosome"/>
</dbReference>
<dbReference type="GO" id="GO:0005829">
    <property type="term" value="C:cytosol"/>
    <property type="evidence" value="ECO:0007669"/>
    <property type="project" value="UniProtKB-SubCell"/>
</dbReference>
<dbReference type="GO" id="GO:0044781">
    <property type="term" value="P:bacterial-type flagellum organization"/>
    <property type="evidence" value="ECO:0007669"/>
    <property type="project" value="UniProtKB-KW"/>
</dbReference>
<dbReference type="GO" id="GO:1902209">
    <property type="term" value="P:negative regulation of bacterial-type flagellum assembly"/>
    <property type="evidence" value="ECO:0007669"/>
    <property type="project" value="UniProtKB-UniRule"/>
</dbReference>
<dbReference type="GO" id="GO:0006457">
    <property type="term" value="P:protein folding"/>
    <property type="evidence" value="ECO:0007669"/>
    <property type="project" value="UniProtKB-UniRule"/>
</dbReference>
<dbReference type="FunFam" id="1.20.58.380:FF:000001">
    <property type="entry name" value="Flagellar protein FliT"/>
    <property type="match status" value="1"/>
</dbReference>
<dbReference type="Gene3D" id="1.20.58.380">
    <property type="entry name" value="Flagellar protein flit"/>
    <property type="match status" value="1"/>
</dbReference>
<dbReference type="HAMAP" id="MF_01180">
    <property type="entry name" value="FliT"/>
    <property type="match status" value="1"/>
</dbReference>
<dbReference type="InterPro" id="IPR008622">
    <property type="entry name" value="FliT"/>
</dbReference>
<dbReference type="NCBIfam" id="NF007836">
    <property type="entry name" value="PRK10548.1"/>
    <property type="match status" value="1"/>
</dbReference>
<dbReference type="Pfam" id="PF05400">
    <property type="entry name" value="FliT"/>
    <property type="match status" value="1"/>
</dbReference>